<proteinExistence type="inferred from homology"/>
<feature type="chain" id="PRO_0000336108" description="UPF0102 protein Acry_2261">
    <location>
        <begin position="1"/>
        <end position="128"/>
    </location>
</feature>
<accession>A5G0S4</accession>
<reference key="1">
    <citation type="submission" date="2007-05" db="EMBL/GenBank/DDBJ databases">
        <title>Complete sequence of chromosome of Acidiphilium cryptum JF-5.</title>
        <authorList>
            <consortium name="US DOE Joint Genome Institute"/>
            <person name="Copeland A."/>
            <person name="Lucas S."/>
            <person name="Lapidus A."/>
            <person name="Barry K."/>
            <person name="Detter J.C."/>
            <person name="Glavina del Rio T."/>
            <person name="Hammon N."/>
            <person name="Israni S."/>
            <person name="Dalin E."/>
            <person name="Tice H."/>
            <person name="Pitluck S."/>
            <person name="Sims D."/>
            <person name="Brettin T."/>
            <person name="Bruce D."/>
            <person name="Han C."/>
            <person name="Schmutz J."/>
            <person name="Larimer F."/>
            <person name="Land M."/>
            <person name="Hauser L."/>
            <person name="Kyrpides N."/>
            <person name="Kim E."/>
            <person name="Magnuson T."/>
            <person name="Richardson P."/>
        </authorList>
    </citation>
    <scope>NUCLEOTIDE SEQUENCE [LARGE SCALE GENOMIC DNA]</scope>
    <source>
        <strain>JF-5</strain>
    </source>
</reference>
<protein>
    <recommendedName>
        <fullName evidence="1">UPF0102 protein Acry_2261</fullName>
    </recommendedName>
</protein>
<keyword id="KW-1185">Reference proteome</keyword>
<gene>
    <name type="ordered locus">Acry_2261</name>
</gene>
<organism>
    <name type="scientific">Acidiphilium cryptum (strain JF-5)</name>
    <dbReference type="NCBI Taxonomy" id="349163"/>
    <lineage>
        <taxon>Bacteria</taxon>
        <taxon>Pseudomonadati</taxon>
        <taxon>Pseudomonadota</taxon>
        <taxon>Alphaproteobacteria</taxon>
        <taxon>Acetobacterales</taxon>
        <taxon>Acidocellaceae</taxon>
        <taxon>Acidiphilium</taxon>
    </lineage>
</organism>
<comment type="similarity">
    <text evidence="1">Belongs to the UPF0102 family.</text>
</comment>
<dbReference type="EMBL" id="CP000697">
    <property type="protein sequence ID" value="ABQ31456.1"/>
    <property type="molecule type" value="Genomic_DNA"/>
</dbReference>
<dbReference type="RefSeq" id="WP_012039917.1">
    <property type="nucleotide sequence ID" value="NC_009484.1"/>
</dbReference>
<dbReference type="SMR" id="A5G0S4"/>
<dbReference type="STRING" id="349163.Acry_2261"/>
<dbReference type="KEGG" id="acr:Acry_2261"/>
<dbReference type="eggNOG" id="COG0792">
    <property type="taxonomic scope" value="Bacteria"/>
</dbReference>
<dbReference type="HOGENOM" id="CLU_115353_0_2_5"/>
<dbReference type="Proteomes" id="UP000000245">
    <property type="component" value="Chromosome"/>
</dbReference>
<dbReference type="GO" id="GO:0003676">
    <property type="term" value="F:nucleic acid binding"/>
    <property type="evidence" value="ECO:0007669"/>
    <property type="project" value="InterPro"/>
</dbReference>
<dbReference type="Gene3D" id="3.40.1350.10">
    <property type="match status" value="1"/>
</dbReference>
<dbReference type="HAMAP" id="MF_00048">
    <property type="entry name" value="UPF0102"/>
    <property type="match status" value="1"/>
</dbReference>
<dbReference type="InterPro" id="IPR011335">
    <property type="entry name" value="Restrct_endonuc-II-like"/>
</dbReference>
<dbReference type="InterPro" id="IPR011856">
    <property type="entry name" value="tRNA_endonuc-like_dom_sf"/>
</dbReference>
<dbReference type="InterPro" id="IPR003509">
    <property type="entry name" value="UPF0102_YraN-like"/>
</dbReference>
<dbReference type="NCBIfam" id="TIGR00252">
    <property type="entry name" value="YraN family protein"/>
    <property type="match status" value="1"/>
</dbReference>
<dbReference type="PANTHER" id="PTHR34039">
    <property type="entry name" value="UPF0102 PROTEIN YRAN"/>
    <property type="match status" value="1"/>
</dbReference>
<dbReference type="PANTHER" id="PTHR34039:SF1">
    <property type="entry name" value="UPF0102 PROTEIN YRAN"/>
    <property type="match status" value="1"/>
</dbReference>
<dbReference type="Pfam" id="PF02021">
    <property type="entry name" value="UPF0102"/>
    <property type="match status" value="1"/>
</dbReference>
<dbReference type="SUPFAM" id="SSF52980">
    <property type="entry name" value="Restriction endonuclease-like"/>
    <property type="match status" value="1"/>
</dbReference>
<evidence type="ECO:0000255" key="1">
    <source>
        <dbReference type="HAMAP-Rule" id="MF_00048"/>
    </source>
</evidence>
<sequence>MRNESERRAAARRRAEHRGRDAERRVAGWYAAQGFVVLAQRLRTAAGELDLVVADRTTLVFVEVKARNALRSAIESVAPRQRRRLVAAAAIVLAGQPDWGRAETRFDVVLLVGDDVHAIRDAFRADDP</sequence>
<name>Y2261_ACICJ</name>